<organism>
    <name type="scientific">Vigna radiata var. radiata</name>
    <name type="common">Mung bean</name>
    <name type="synonym">Phaseolus aureus</name>
    <dbReference type="NCBI Taxonomy" id="3916"/>
    <lineage>
        <taxon>Eukaryota</taxon>
        <taxon>Viridiplantae</taxon>
        <taxon>Streptophyta</taxon>
        <taxon>Embryophyta</taxon>
        <taxon>Tracheophyta</taxon>
        <taxon>Spermatophyta</taxon>
        <taxon>Magnoliopsida</taxon>
        <taxon>eudicotyledons</taxon>
        <taxon>Gunneridae</taxon>
        <taxon>Pentapetalae</taxon>
        <taxon>rosids</taxon>
        <taxon>fabids</taxon>
        <taxon>Fabales</taxon>
        <taxon>Fabaceae</taxon>
        <taxon>Papilionoideae</taxon>
        <taxon>50 kb inversion clade</taxon>
        <taxon>NPAAA clade</taxon>
        <taxon>indigoferoid/millettioid clade</taxon>
        <taxon>Phaseoleae</taxon>
        <taxon>Vigna</taxon>
    </lineage>
</organism>
<gene>
    <name type="primary">AUX22D</name>
    <name type="synonym">ARG13</name>
</gene>
<protein>
    <recommendedName>
        <fullName>Auxin-induced protein 22D</fullName>
    </recommendedName>
    <alternativeName>
        <fullName>Indole-3-acetic acid-induced protein ARG13</fullName>
    </alternativeName>
</protein>
<reference key="1">
    <citation type="online journal article" date="1997" name="Plant Gene Register">
        <title>Three more members of the Aux/IAA gene family from mung bean (Vigna radiata) hypocotyl.</title>
        <authorList>
            <person name="Hashimoto H."/>
            <person name="Yamamoto K.T."/>
        </authorList>
        <locator>PGR97-137</locator>
    </citation>
    <scope>NUCLEOTIDE SEQUENCE [MRNA]</scope>
    <source>
        <tissue>Hypocotyl</tissue>
    </source>
</reference>
<sequence>MENSLGSYEKELNLKATELRLGLPGSDEPEKRATARSNKRSSPEASDEESISNGSDVTKEDNVVPPAKAQVVGWPPIRSYRKNNVQQKKEEESEGNGMYVKVSMAGAPYLRKIDLKVYKSYPELLKALENMFKCIFGEYSEREGYNGSEYAPTYEDKDGDWMLVGDVPWNMFVSSCKRLRIMKGSEAKGLGCF</sequence>
<dbReference type="EMBL" id="AB004932">
    <property type="protein sequence ID" value="BAA20848.1"/>
    <property type="molecule type" value="mRNA"/>
</dbReference>
<dbReference type="PIR" id="T10884">
    <property type="entry name" value="T10884"/>
</dbReference>
<dbReference type="SMR" id="O24542"/>
<dbReference type="STRING" id="3916.O24542"/>
<dbReference type="Proteomes" id="UP000087766">
    <property type="component" value="Unplaced"/>
</dbReference>
<dbReference type="GO" id="GO:0005634">
    <property type="term" value="C:nucleus"/>
    <property type="evidence" value="ECO:0007669"/>
    <property type="project" value="UniProtKB-SubCell"/>
</dbReference>
<dbReference type="GO" id="GO:0009734">
    <property type="term" value="P:auxin-activated signaling pathway"/>
    <property type="evidence" value="ECO:0007669"/>
    <property type="project" value="UniProtKB-KW"/>
</dbReference>
<dbReference type="GO" id="GO:0006355">
    <property type="term" value="P:regulation of DNA-templated transcription"/>
    <property type="evidence" value="ECO:0007669"/>
    <property type="project" value="InterPro"/>
</dbReference>
<dbReference type="FunFam" id="3.10.20.90:FF:000078">
    <property type="entry name" value="Auxin-responsive protein"/>
    <property type="match status" value="1"/>
</dbReference>
<dbReference type="Gene3D" id="3.10.20.90">
    <property type="entry name" value="Phosphatidylinositol 3-kinase Catalytic Subunit, Chain A, domain 1"/>
    <property type="match status" value="1"/>
</dbReference>
<dbReference type="InterPro" id="IPR033389">
    <property type="entry name" value="AUX/IAA_dom"/>
</dbReference>
<dbReference type="InterPro" id="IPR003311">
    <property type="entry name" value="AUX_IAA"/>
</dbReference>
<dbReference type="InterPro" id="IPR053793">
    <property type="entry name" value="PB1-like"/>
</dbReference>
<dbReference type="PANTHER" id="PTHR31734">
    <property type="entry name" value="AUXIN-RESPONSIVE PROTEIN IAA17"/>
    <property type="match status" value="1"/>
</dbReference>
<dbReference type="PANTHER" id="PTHR31734:SF8">
    <property type="entry name" value="AUXIN-RESPONSIVE PROTEIN IAA24"/>
    <property type="match status" value="1"/>
</dbReference>
<dbReference type="Pfam" id="PF02309">
    <property type="entry name" value="AUX_IAA"/>
    <property type="match status" value="1"/>
</dbReference>
<dbReference type="SUPFAM" id="SSF54277">
    <property type="entry name" value="CAD &amp; PB1 domains"/>
    <property type="match status" value="1"/>
</dbReference>
<dbReference type="PROSITE" id="PS51745">
    <property type="entry name" value="PB1"/>
    <property type="match status" value="1"/>
</dbReference>
<name>AX22D_VIGRR</name>
<accession>O24542</accession>
<keyword id="KW-0927">Auxin signaling pathway</keyword>
<keyword id="KW-0539">Nucleus</keyword>
<keyword id="KW-1185">Reference proteome</keyword>
<keyword id="KW-0678">Repressor</keyword>
<keyword id="KW-0804">Transcription</keyword>
<keyword id="KW-0805">Transcription regulation</keyword>
<feature type="chain" id="PRO_0000112866" description="Auxin-induced protein 22D">
    <location>
        <begin position="1"/>
        <end position="193"/>
    </location>
</feature>
<feature type="domain" description="PB1" evidence="2">
    <location>
        <begin position="97"/>
        <end position="184"/>
    </location>
</feature>
<feature type="region of interest" description="Disordered" evidence="3">
    <location>
        <begin position="16"/>
        <end position="68"/>
    </location>
</feature>
<feature type="short sequence motif" description="EAR-like (transcriptional repression)">
    <location>
        <begin position="19"/>
        <end position="23"/>
    </location>
</feature>
<proteinExistence type="evidence at transcript level"/>
<comment type="function">
    <text evidence="1">Aux/IAA proteins are short-lived transcriptional factors that function as repressors of early auxin response genes at low auxin concentrations. Repression is thought to result from the interaction with auxin response factors (ARFs), proteins that bind to the auxin-responsive promoter element (AuxRE). Formation of heterodimers with ARF proteins may alter their ability to modulate early auxin response genes expression (By similarity).</text>
</comment>
<comment type="subunit">
    <text evidence="1">Homodimers and heterodimers.</text>
</comment>
<comment type="subcellular location">
    <subcellularLocation>
        <location evidence="1">Nucleus</location>
    </subcellularLocation>
</comment>
<comment type="induction">
    <text>By auxin.</text>
</comment>
<comment type="domain">
    <text evidence="1">The N-terminal half of the protein contains two conserved domains I and II. Domain I includes a slightly degenerated ERF-associated amphiphilic repression (EAR) motif which seems to be involved in the activity of transcriptional repression. Domain II is required for the correct degradation of the protein through the SCF-mediated ubiquitin-proteasome pathway. Interactions between Aux/IAA proteins and auxin response factors (ARFs) occur through their C-terminal dimerization domains III and IV (By similarity).</text>
</comment>
<comment type="similarity">
    <text evidence="4">Belongs to the Aux/IAA family.</text>
</comment>
<evidence type="ECO:0000250" key="1"/>
<evidence type="ECO:0000255" key="2">
    <source>
        <dbReference type="PROSITE-ProRule" id="PRU01081"/>
    </source>
</evidence>
<evidence type="ECO:0000256" key="3">
    <source>
        <dbReference type="SAM" id="MobiDB-lite"/>
    </source>
</evidence>
<evidence type="ECO:0000305" key="4"/>